<feature type="chain" id="PRO_1000072101" description="DNA replication and repair protein RecF">
    <location>
        <begin position="1"/>
        <end position="363"/>
    </location>
</feature>
<feature type="binding site" evidence="1">
    <location>
        <begin position="30"/>
        <end position="37"/>
    </location>
    <ligand>
        <name>ATP</name>
        <dbReference type="ChEBI" id="CHEBI:30616"/>
    </ligand>
</feature>
<gene>
    <name evidence="1" type="primary">recF</name>
    <name type="ordered locus">VC0395_A2505</name>
    <name type="ordered locus">VC395_0166</name>
</gene>
<organism>
    <name type="scientific">Vibrio cholerae serotype O1 (strain ATCC 39541 / Classical Ogawa 395 / O395)</name>
    <dbReference type="NCBI Taxonomy" id="345073"/>
    <lineage>
        <taxon>Bacteria</taxon>
        <taxon>Pseudomonadati</taxon>
        <taxon>Pseudomonadota</taxon>
        <taxon>Gammaproteobacteria</taxon>
        <taxon>Vibrionales</taxon>
        <taxon>Vibrionaceae</taxon>
        <taxon>Vibrio</taxon>
    </lineage>
</organism>
<proteinExistence type="inferred from homology"/>
<keyword id="KW-0067">ATP-binding</keyword>
<keyword id="KW-0963">Cytoplasm</keyword>
<keyword id="KW-0227">DNA damage</keyword>
<keyword id="KW-0234">DNA repair</keyword>
<keyword id="KW-0235">DNA replication</keyword>
<keyword id="KW-0238">DNA-binding</keyword>
<keyword id="KW-0547">Nucleotide-binding</keyword>
<keyword id="KW-0742">SOS response</keyword>
<reference key="1">
    <citation type="submission" date="2007-03" db="EMBL/GenBank/DDBJ databases">
        <authorList>
            <person name="Heidelberg J."/>
        </authorList>
    </citation>
    <scope>NUCLEOTIDE SEQUENCE [LARGE SCALE GENOMIC DNA]</scope>
    <source>
        <strain>ATCC 39541 / Classical Ogawa 395 / O395</strain>
    </source>
</reference>
<reference key="2">
    <citation type="journal article" date="2008" name="PLoS ONE">
        <title>A recalibrated molecular clock and independent origins for the cholera pandemic clones.</title>
        <authorList>
            <person name="Feng L."/>
            <person name="Reeves P.R."/>
            <person name="Lan R."/>
            <person name="Ren Y."/>
            <person name="Gao C."/>
            <person name="Zhou Z."/>
            <person name="Ren Y."/>
            <person name="Cheng J."/>
            <person name="Wang W."/>
            <person name="Wang J."/>
            <person name="Qian W."/>
            <person name="Li D."/>
            <person name="Wang L."/>
        </authorList>
    </citation>
    <scope>NUCLEOTIDE SEQUENCE [LARGE SCALE GENOMIC DNA]</scope>
    <source>
        <strain>ATCC 39541 / Classical Ogawa 395 / O395</strain>
    </source>
</reference>
<accession>A5F493</accession>
<accession>C3M314</accession>
<protein>
    <recommendedName>
        <fullName evidence="1">DNA replication and repair protein RecF</fullName>
    </recommendedName>
</protein>
<name>RECF_VIBC3</name>
<evidence type="ECO:0000255" key="1">
    <source>
        <dbReference type="HAMAP-Rule" id="MF_00365"/>
    </source>
</evidence>
<dbReference type="EMBL" id="CP000627">
    <property type="protein sequence ID" value="ABQ21976.1"/>
    <property type="molecule type" value="Genomic_DNA"/>
</dbReference>
<dbReference type="EMBL" id="CP001235">
    <property type="protein sequence ID" value="ACP08193.1"/>
    <property type="molecule type" value="Genomic_DNA"/>
</dbReference>
<dbReference type="RefSeq" id="WP_001884355.1">
    <property type="nucleotide sequence ID" value="NZ_JAACZH010000018.1"/>
</dbReference>
<dbReference type="SMR" id="A5F493"/>
<dbReference type="GeneID" id="89513096"/>
<dbReference type="KEGG" id="vco:VC0395_A2505"/>
<dbReference type="KEGG" id="vcr:VC395_0166"/>
<dbReference type="PATRIC" id="fig|345073.21.peg.157"/>
<dbReference type="eggNOG" id="COG1195">
    <property type="taxonomic scope" value="Bacteria"/>
</dbReference>
<dbReference type="HOGENOM" id="CLU_040267_0_0_6"/>
<dbReference type="OrthoDB" id="9803889at2"/>
<dbReference type="Proteomes" id="UP000000249">
    <property type="component" value="Chromosome 2"/>
</dbReference>
<dbReference type="GO" id="GO:0005737">
    <property type="term" value="C:cytoplasm"/>
    <property type="evidence" value="ECO:0007669"/>
    <property type="project" value="UniProtKB-SubCell"/>
</dbReference>
<dbReference type="GO" id="GO:0005524">
    <property type="term" value="F:ATP binding"/>
    <property type="evidence" value="ECO:0007669"/>
    <property type="project" value="UniProtKB-UniRule"/>
</dbReference>
<dbReference type="GO" id="GO:0003697">
    <property type="term" value="F:single-stranded DNA binding"/>
    <property type="evidence" value="ECO:0007669"/>
    <property type="project" value="UniProtKB-UniRule"/>
</dbReference>
<dbReference type="GO" id="GO:0006260">
    <property type="term" value="P:DNA replication"/>
    <property type="evidence" value="ECO:0007669"/>
    <property type="project" value="UniProtKB-UniRule"/>
</dbReference>
<dbReference type="GO" id="GO:0000731">
    <property type="term" value="P:DNA synthesis involved in DNA repair"/>
    <property type="evidence" value="ECO:0007669"/>
    <property type="project" value="TreeGrafter"/>
</dbReference>
<dbReference type="GO" id="GO:0006302">
    <property type="term" value="P:double-strand break repair"/>
    <property type="evidence" value="ECO:0007669"/>
    <property type="project" value="TreeGrafter"/>
</dbReference>
<dbReference type="GO" id="GO:0009432">
    <property type="term" value="P:SOS response"/>
    <property type="evidence" value="ECO:0007669"/>
    <property type="project" value="UniProtKB-UniRule"/>
</dbReference>
<dbReference type="FunFam" id="1.20.1050.90:FF:000001">
    <property type="entry name" value="DNA replication and repair protein RecF"/>
    <property type="match status" value="1"/>
</dbReference>
<dbReference type="Gene3D" id="3.40.50.300">
    <property type="entry name" value="P-loop containing nucleotide triphosphate hydrolases"/>
    <property type="match status" value="1"/>
</dbReference>
<dbReference type="Gene3D" id="1.20.1050.90">
    <property type="entry name" value="RecF/RecN/SMC, N-terminal domain"/>
    <property type="match status" value="1"/>
</dbReference>
<dbReference type="HAMAP" id="MF_00365">
    <property type="entry name" value="RecF"/>
    <property type="match status" value="1"/>
</dbReference>
<dbReference type="InterPro" id="IPR001238">
    <property type="entry name" value="DNA-binding_RecF"/>
</dbReference>
<dbReference type="InterPro" id="IPR018078">
    <property type="entry name" value="DNA-binding_RecF_CS"/>
</dbReference>
<dbReference type="InterPro" id="IPR027417">
    <property type="entry name" value="P-loop_NTPase"/>
</dbReference>
<dbReference type="InterPro" id="IPR003395">
    <property type="entry name" value="RecF/RecN/SMC_N"/>
</dbReference>
<dbReference type="InterPro" id="IPR042174">
    <property type="entry name" value="RecF_2"/>
</dbReference>
<dbReference type="NCBIfam" id="TIGR00611">
    <property type="entry name" value="recf"/>
    <property type="match status" value="1"/>
</dbReference>
<dbReference type="PANTHER" id="PTHR32182">
    <property type="entry name" value="DNA REPLICATION AND REPAIR PROTEIN RECF"/>
    <property type="match status" value="1"/>
</dbReference>
<dbReference type="PANTHER" id="PTHR32182:SF0">
    <property type="entry name" value="DNA REPLICATION AND REPAIR PROTEIN RECF"/>
    <property type="match status" value="1"/>
</dbReference>
<dbReference type="Pfam" id="PF02463">
    <property type="entry name" value="SMC_N"/>
    <property type="match status" value="1"/>
</dbReference>
<dbReference type="SUPFAM" id="SSF52540">
    <property type="entry name" value="P-loop containing nucleoside triphosphate hydrolases"/>
    <property type="match status" value="1"/>
</dbReference>
<dbReference type="PROSITE" id="PS00617">
    <property type="entry name" value="RECF_1"/>
    <property type="match status" value="1"/>
</dbReference>
<dbReference type="PROSITE" id="PS00618">
    <property type="entry name" value="RECF_2"/>
    <property type="match status" value="1"/>
</dbReference>
<sequence length="363" mass="41220">MPLSRLMIQQFRNIKACDIRLSAGFNFLIGPNGSGKTSVLEAIYLLGHGRSFKSSLTGRIIQNECSELFVHGRICEHSLSSDQFELPVGINKQRDGSTEVKIGGQTGQKLAQLAQILPLQLIHPEGFELLTDGPKQRRAFIDWGVFHTEPAFFDAWGRFKRLSKQRNALLKSAQSYRELSYWDQELARLAEQIDQWRESYVNQLKNVAEQLCRTFLPEFDIDLKYYRGWEKDQPYQSILEKNFERDQQLGYTFSGPNKADLRIKVNATPVEDVLSRGQLKLMVCALRVAQGQHLTELTGKQCIYLIDDFASELDSLRRQRLADSLKGTGAQVFVSSITESQVADMLDESSKTFHVAHGVIEQG</sequence>
<comment type="function">
    <text evidence="1">The RecF protein is involved in DNA metabolism; it is required for DNA replication and normal SOS inducibility. RecF binds preferentially to single-stranded, linear DNA. It also seems to bind ATP.</text>
</comment>
<comment type="subcellular location">
    <subcellularLocation>
        <location evidence="1">Cytoplasm</location>
    </subcellularLocation>
</comment>
<comment type="similarity">
    <text evidence="1">Belongs to the RecF family.</text>
</comment>